<reference key="1">
    <citation type="submission" date="2007-07" db="EMBL/GenBank/DDBJ databases">
        <title>Complete sequence of chromosome of Shewanella baltica OS185.</title>
        <authorList>
            <consortium name="US DOE Joint Genome Institute"/>
            <person name="Copeland A."/>
            <person name="Lucas S."/>
            <person name="Lapidus A."/>
            <person name="Barry K."/>
            <person name="Glavina del Rio T."/>
            <person name="Dalin E."/>
            <person name="Tice H."/>
            <person name="Pitluck S."/>
            <person name="Sims D."/>
            <person name="Brettin T."/>
            <person name="Bruce D."/>
            <person name="Detter J.C."/>
            <person name="Han C."/>
            <person name="Schmutz J."/>
            <person name="Larimer F."/>
            <person name="Land M."/>
            <person name="Hauser L."/>
            <person name="Kyrpides N."/>
            <person name="Mikhailova N."/>
            <person name="Brettar I."/>
            <person name="Rodrigues J."/>
            <person name="Konstantinidis K."/>
            <person name="Tiedje J."/>
            <person name="Richardson P."/>
        </authorList>
    </citation>
    <scope>NUCLEOTIDE SEQUENCE [LARGE SCALE GENOMIC DNA]</scope>
    <source>
        <strain>OS185</strain>
    </source>
</reference>
<name>Y4070_SHEB8</name>
<feature type="chain" id="PRO_1000009257" description="UPF0102 protein Shew185_4070">
    <location>
        <begin position="1"/>
        <end position="108"/>
    </location>
</feature>
<organism>
    <name type="scientific">Shewanella baltica (strain OS185)</name>
    <dbReference type="NCBI Taxonomy" id="402882"/>
    <lineage>
        <taxon>Bacteria</taxon>
        <taxon>Pseudomonadati</taxon>
        <taxon>Pseudomonadota</taxon>
        <taxon>Gammaproteobacteria</taxon>
        <taxon>Alteromonadales</taxon>
        <taxon>Shewanellaceae</taxon>
        <taxon>Shewanella</taxon>
    </lineage>
</organism>
<dbReference type="EMBL" id="CP000753">
    <property type="protein sequence ID" value="ABS10188.1"/>
    <property type="molecule type" value="Genomic_DNA"/>
</dbReference>
<dbReference type="RefSeq" id="WP_006084496.1">
    <property type="nucleotide sequence ID" value="NC_009665.1"/>
</dbReference>
<dbReference type="SMR" id="A6WTP9"/>
<dbReference type="GeneID" id="11774176"/>
<dbReference type="KEGG" id="sbm:Shew185_4070"/>
<dbReference type="HOGENOM" id="CLU_115353_1_1_6"/>
<dbReference type="GO" id="GO:0003676">
    <property type="term" value="F:nucleic acid binding"/>
    <property type="evidence" value="ECO:0007669"/>
    <property type="project" value="InterPro"/>
</dbReference>
<dbReference type="CDD" id="cd20736">
    <property type="entry name" value="PoNe_Nuclease"/>
    <property type="match status" value="1"/>
</dbReference>
<dbReference type="Gene3D" id="3.40.1350.10">
    <property type="match status" value="1"/>
</dbReference>
<dbReference type="HAMAP" id="MF_00048">
    <property type="entry name" value="UPF0102"/>
    <property type="match status" value="1"/>
</dbReference>
<dbReference type="InterPro" id="IPR011335">
    <property type="entry name" value="Restrct_endonuc-II-like"/>
</dbReference>
<dbReference type="InterPro" id="IPR011856">
    <property type="entry name" value="tRNA_endonuc-like_dom_sf"/>
</dbReference>
<dbReference type="InterPro" id="IPR003509">
    <property type="entry name" value="UPF0102_YraN-like"/>
</dbReference>
<dbReference type="NCBIfam" id="NF009150">
    <property type="entry name" value="PRK12497.1-3"/>
    <property type="match status" value="1"/>
</dbReference>
<dbReference type="NCBIfam" id="TIGR00252">
    <property type="entry name" value="YraN family protein"/>
    <property type="match status" value="1"/>
</dbReference>
<dbReference type="PANTHER" id="PTHR34039">
    <property type="entry name" value="UPF0102 PROTEIN YRAN"/>
    <property type="match status" value="1"/>
</dbReference>
<dbReference type="PANTHER" id="PTHR34039:SF1">
    <property type="entry name" value="UPF0102 PROTEIN YRAN"/>
    <property type="match status" value="1"/>
</dbReference>
<dbReference type="Pfam" id="PF02021">
    <property type="entry name" value="UPF0102"/>
    <property type="match status" value="1"/>
</dbReference>
<dbReference type="SUPFAM" id="SSF52980">
    <property type="entry name" value="Restriction endonuclease-like"/>
    <property type="match status" value="1"/>
</dbReference>
<gene>
    <name type="ordered locus">Shew185_4070</name>
</gene>
<proteinExistence type="inferred from homology"/>
<evidence type="ECO:0000255" key="1">
    <source>
        <dbReference type="HAMAP-Rule" id="MF_00048"/>
    </source>
</evidence>
<sequence>MTLGQQAEAHAQRYLEQQGLTFVERNVRYPFGEIDLIMRHKSHWVFVEVKYRSATQYGGALQALSAAQITRIRKAANHYLQLNRLDVPCRFDVIAMEADQIHWLVDAF</sequence>
<comment type="similarity">
    <text evidence="1">Belongs to the UPF0102 family.</text>
</comment>
<accession>A6WTP9</accession>
<protein>
    <recommendedName>
        <fullName evidence="1">UPF0102 protein Shew185_4070</fullName>
    </recommendedName>
</protein>